<feature type="chain" id="PRO_0000131395" description="Large ribosomal subunit protein uL18">
    <location>
        <begin position="1"/>
        <end position="117"/>
    </location>
</feature>
<accession>Q8ZJ96</accession>
<accession>Q0WK82</accession>
<accession>Q74XY5</accession>
<accession>Q7CFT3</accession>
<keyword id="KW-1185">Reference proteome</keyword>
<keyword id="KW-0687">Ribonucleoprotein</keyword>
<keyword id="KW-0689">Ribosomal protein</keyword>
<keyword id="KW-0694">RNA-binding</keyword>
<keyword id="KW-0699">rRNA-binding</keyword>
<comment type="function">
    <text evidence="1">This is one of the proteins that bind and probably mediate the attachment of the 5S RNA into the large ribosomal subunit, where it forms part of the central protuberance.</text>
</comment>
<comment type="subunit">
    <text evidence="1">Part of the 50S ribosomal subunit; part of the 5S rRNA/L5/L18/L25 subcomplex. Contacts the 5S and 23S rRNAs.</text>
</comment>
<comment type="similarity">
    <text evidence="1">Belongs to the universal ribosomal protein uL18 family.</text>
</comment>
<organism>
    <name type="scientific">Yersinia pestis</name>
    <dbReference type="NCBI Taxonomy" id="632"/>
    <lineage>
        <taxon>Bacteria</taxon>
        <taxon>Pseudomonadati</taxon>
        <taxon>Pseudomonadota</taxon>
        <taxon>Gammaproteobacteria</taxon>
        <taxon>Enterobacterales</taxon>
        <taxon>Yersiniaceae</taxon>
        <taxon>Yersinia</taxon>
    </lineage>
</organism>
<protein>
    <recommendedName>
        <fullName evidence="1">Large ribosomal subunit protein uL18</fullName>
    </recommendedName>
    <alternativeName>
        <fullName evidence="2">50S ribosomal protein L18</fullName>
    </alternativeName>
</protein>
<proteinExistence type="inferred from homology"/>
<gene>
    <name evidence="1" type="primary">rplR</name>
    <name type="ordered locus">YPO0225</name>
    <name type="ordered locus">y4006</name>
    <name type="ordered locus">YP_0223</name>
</gene>
<evidence type="ECO:0000255" key="1">
    <source>
        <dbReference type="HAMAP-Rule" id="MF_01337"/>
    </source>
</evidence>
<evidence type="ECO:0000305" key="2"/>
<reference key="1">
    <citation type="journal article" date="2001" name="Nature">
        <title>Genome sequence of Yersinia pestis, the causative agent of plague.</title>
        <authorList>
            <person name="Parkhill J."/>
            <person name="Wren B.W."/>
            <person name="Thomson N.R."/>
            <person name="Titball R.W."/>
            <person name="Holden M.T.G."/>
            <person name="Prentice M.B."/>
            <person name="Sebaihia M."/>
            <person name="James K.D."/>
            <person name="Churcher C.M."/>
            <person name="Mungall K.L."/>
            <person name="Baker S."/>
            <person name="Basham D."/>
            <person name="Bentley S.D."/>
            <person name="Brooks K."/>
            <person name="Cerdeno-Tarraga A.-M."/>
            <person name="Chillingworth T."/>
            <person name="Cronin A."/>
            <person name="Davies R.M."/>
            <person name="Davis P."/>
            <person name="Dougan G."/>
            <person name="Feltwell T."/>
            <person name="Hamlin N."/>
            <person name="Holroyd S."/>
            <person name="Jagels K."/>
            <person name="Karlyshev A.V."/>
            <person name="Leather S."/>
            <person name="Moule S."/>
            <person name="Oyston P.C.F."/>
            <person name="Quail M.A."/>
            <person name="Rutherford K.M."/>
            <person name="Simmonds M."/>
            <person name="Skelton J."/>
            <person name="Stevens K."/>
            <person name="Whitehead S."/>
            <person name="Barrell B.G."/>
        </authorList>
    </citation>
    <scope>NUCLEOTIDE SEQUENCE [LARGE SCALE GENOMIC DNA]</scope>
    <source>
        <strain>CO-92 / Biovar Orientalis</strain>
    </source>
</reference>
<reference key="2">
    <citation type="journal article" date="2002" name="J. Bacteriol.">
        <title>Genome sequence of Yersinia pestis KIM.</title>
        <authorList>
            <person name="Deng W."/>
            <person name="Burland V."/>
            <person name="Plunkett G. III"/>
            <person name="Boutin A."/>
            <person name="Mayhew G.F."/>
            <person name="Liss P."/>
            <person name="Perna N.T."/>
            <person name="Rose D.J."/>
            <person name="Mau B."/>
            <person name="Zhou S."/>
            <person name="Schwartz D.C."/>
            <person name="Fetherston J.D."/>
            <person name="Lindler L.E."/>
            <person name="Brubaker R.R."/>
            <person name="Plano G.V."/>
            <person name="Straley S.C."/>
            <person name="McDonough K.A."/>
            <person name="Nilles M.L."/>
            <person name="Matson J.S."/>
            <person name="Blattner F.R."/>
            <person name="Perry R.D."/>
        </authorList>
    </citation>
    <scope>NUCLEOTIDE SEQUENCE [LARGE SCALE GENOMIC DNA]</scope>
    <source>
        <strain>KIM10+ / Biovar Mediaevalis</strain>
    </source>
</reference>
<reference key="3">
    <citation type="journal article" date="2004" name="DNA Res.">
        <title>Complete genome sequence of Yersinia pestis strain 91001, an isolate avirulent to humans.</title>
        <authorList>
            <person name="Song Y."/>
            <person name="Tong Z."/>
            <person name="Wang J."/>
            <person name="Wang L."/>
            <person name="Guo Z."/>
            <person name="Han Y."/>
            <person name="Zhang J."/>
            <person name="Pei D."/>
            <person name="Zhou D."/>
            <person name="Qin H."/>
            <person name="Pang X."/>
            <person name="Han Y."/>
            <person name="Zhai J."/>
            <person name="Li M."/>
            <person name="Cui B."/>
            <person name="Qi Z."/>
            <person name="Jin L."/>
            <person name="Dai R."/>
            <person name="Chen F."/>
            <person name="Li S."/>
            <person name="Ye C."/>
            <person name="Du Z."/>
            <person name="Lin W."/>
            <person name="Wang J."/>
            <person name="Yu J."/>
            <person name="Yang H."/>
            <person name="Wang J."/>
            <person name="Huang P."/>
            <person name="Yang R."/>
        </authorList>
    </citation>
    <scope>NUCLEOTIDE SEQUENCE [LARGE SCALE GENOMIC DNA]</scope>
    <source>
        <strain>91001 / Biovar Mediaevalis</strain>
    </source>
</reference>
<dbReference type="EMBL" id="AL590842">
    <property type="protein sequence ID" value="CAL18908.1"/>
    <property type="molecule type" value="Genomic_DNA"/>
</dbReference>
<dbReference type="EMBL" id="AE009952">
    <property type="protein sequence ID" value="AAM87550.1"/>
    <property type="molecule type" value="Genomic_DNA"/>
</dbReference>
<dbReference type="EMBL" id="AE017042">
    <property type="protein sequence ID" value="AAS60499.1"/>
    <property type="molecule type" value="Genomic_DNA"/>
</dbReference>
<dbReference type="PIR" id="AB0028">
    <property type="entry name" value="AB0028"/>
</dbReference>
<dbReference type="RefSeq" id="WP_002213336.1">
    <property type="nucleotide sequence ID" value="NZ_WUCM01000078.1"/>
</dbReference>
<dbReference type="RefSeq" id="YP_002345306.1">
    <property type="nucleotide sequence ID" value="NC_003143.1"/>
</dbReference>
<dbReference type="SMR" id="Q8ZJ96"/>
<dbReference type="STRING" id="214092.YPO0225"/>
<dbReference type="PaxDb" id="214092-YPO0225"/>
<dbReference type="DNASU" id="1148953"/>
<dbReference type="EnsemblBacteria" id="AAS60499">
    <property type="protein sequence ID" value="AAS60499"/>
    <property type="gene ID" value="YP_0223"/>
</dbReference>
<dbReference type="GeneID" id="97454247"/>
<dbReference type="KEGG" id="ype:YPO0225"/>
<dbReference type="KEGG" id="ypk:y4006"/>
<dbReference type="KEGG" id="ypm:YP_0223"/>
<dbReference type="PATRIC" id="fig|214092.21.peg.454"/>
<dbReference type="eggNOG" id="COG0256">
    <property type="taxonomic scope" value="Bacteria"/>
</dbReference>
<dbReference type="HOGENOM" id="CLU_098841_0_1_6"/>
<dbReference type="OMA" id="NKQIYAQ"/>
<dbReference type="OrthoDB" id="9810939at2"/>
<dbReference type="Proteomes" id="UP000000815">
    <property type="component" value="Chromosome"/>
</dbReference>
<dbReference type="Proteomes" id="UP000001019">
    <property type="component" value="Chromosome"/>
</dbReference>
<dbReference type="Proteomes" id="UP000002490">
    <property type="component" value="Chromosome"/>
</dbReference>
<dbReference type="GO" id="GO:0022625">
    <property type="term" value="C:cytosolic large ribosomal subunit"/>
    <property type="evidence" value="ECO:0000318"/>
    <property type="project" value="GO_Central"/>
</dbReference>
<dbReference type="GO" id="GO:0008097">
    <property type="term" value="F:5S rRNA binding"/>
    <property type="evidence" value="ECO:0000318"/>
    <property type="project" value="GO_Central"/>
</dbReference>
<dbReference type="GO" id="GO:0003735">
    <property type="term" value="F:structural constituent of ribosome"/>
    <property type="evidence" value="ECO:0007669"/>
    <property type="project" value="InterPro"/>
</dbReference>
<dbReference type="GO" id="GO:0006412">
    <property type="term" value="P:translation"/>
    <property type="evidence" value="ECO:0007669"/>
    <property type="project" value="UniProtKB-UniRule"/>
</dbReference>
<dbReference type="CDD" id="cd00432">
    <property type="entry name" value="Ribosomal_L18_L5e"/>
    <property type="match status" value="1"/>
</dbReference>
<dbReference type="FunFam" id="3.30.420.100:FF:000001">
    <property type="entry name" value="50S ribosomal protein L18"/>
    <property type="match status" value="1"/>
</dbReference>
<dbReference type="Gene3D" id="3.30.420.100">
    <property type="match status" value="1"/>
</dbReference>
<dbReference type="HAMAP" id="MF_01337_B">
    <property type="entry name" value="Ribosomal_uL18_B"/>
    <property type="match status" value="1"/>
</dbReference>
<dbReference type="InterPro" id="IPR004389">
    <property type="entry name" value="Ribosomal_uL18_bac-type"/>
</dbReference>
<dbReference type="InterPro" id="IPR005484">
    <property type="entry name" value="Ribosomal_uL18_bac/euk"/>
</dbReference>
<dbReference type="NCBIfam" id="TIGR00060">
    <property type="entry name" value="L18_bact"/>
    <property type="match status" value="1"/>
</dbReference>
<dbReference type="PANTHER" id="PTHR12899">
    <property type="entry name" value="39S RIBOSOMAL PROTEIN L18, MITOCHONDRIAL"/>
    <property type="match status" value="1"/>
</dbReference>
<dbReference type="PANTHER" id="PTHR12899:SF3">
    <property type="entry name" value="LARGE RIBOSOMAL SUBUNIT PROTEIN UL18M"/>
    <property type="match status" value="1"/>
</dbReference>
<dbReference type="Pfam" id="PF00861">
    <property type="entry name" value="Ribosomal_L18p"/>
    <property type="match status" value="1"/>
</dbReference>
<dbReference type="SUPFAM" id="SSF53137">
    <property type="entry name" value="Translational machinery components"/>
    <property type="match status" value="1"/>
</dbReference>
<name>RL18_YERPE</name>
<sequence>MDKKAARIRRATRARRKLKELGATRLVVHRTPRHIYAQVIAPNGSEILVAASTVEKAINEQLKYAGNKDAAAAVGKTIAERALEKGITKVSFDRSGFQYHGRVQALADAAREAGLQF</sequence>